<accession>Q96QE2</accession>
<accession>Q17S07</accession>
<keyword id="KW-1003">Cell membrane</keyword>
<keyword id="KW-0325">Glycoprotein</keyword>
<keyword id="KW-0472">Membrane</keyword>
<keyword id="KW-0597">Phosphoprotein</keyword>
<keyword id="KW-1267">Proteomics identification</keyword>
<keyword id="KW-1185">Reference proteome</keyword>
<keyword id="KW-0812">Transmembrane</keyword>
<keyword id="KW-1133">Transmembrane helix</keyword>
<keyword id="KW-0813">Transport</keyword>
<reference key="1">
    <citation type="journal article" date="2001" name="EMBO J.">
        <title>Identification of a mammalian H(+)-myo-inositol symporter expressed predominantly in the brain.</title>
        <authorList>
            <person name="Uldry M."/>
            <person name="Ibberson M."/>
            <person name="Horisberger J.-D."/>
            <person name="Chatton J.-Y."/>
            <person name="Riederer B.M."/>
            <person name="Thorens B."/>
        </authorList>
    </citation>
    <scope>NUCLEOTIDE SEQUENCE [MRNA]</scope>
    <scope>FUNCTION</scope>
    <scope>TRANSPORTER ACTIVITY</scope>
    <scope>SUBCELLULAR LOCATION</scope>
    <scope>GLYCOSYLATION</scope>
    <scope>TISSUE SPECIFICITY</scope>
</reference>
<reference key="2">
    <citation type="journal article" date="2004" name="Genome Res.">
        <title>The status, quality, and expansion of the NIH full-length cDNA project: the Mammalian Gene Collection (MGC).</title>
        <authorList>
            <consortium name="The MGC Project Team"/>
        </authorList>
    </citation>
    <scope>NUCLEOTIDE SEQUENCE [LARGE SCALE MRNA] OF 3-648</scope>
    <source>
        <tissue>Brain</tissue>
    </source>
</reference>
<reference key="3">
    <citation type="journal article" date="2006" name="Cell">
        <title>Global, in vivo, and site-specific phosphorylation dynamics in signaling networks.</title>
        <authorList>
            <person name="Olsen J.V."/>
            <person name="Blagoev B."/>
            <person name="Gnad F."/>
            <person name="Macek B."/>
            <person name="Kumar C."/>
            <person name="Mortensen P."/>
            <person name="Mann M."/>
        </authorList>
    </citation>
    <scope>PHOSPHORYLATION [LARGE SCALE ANALYSIS] AT SER-640 AND SER-645</scope>
    <scope>IDENTIFICATION BY MASS SPECTROMETRY [LARGE SCALE ANALYSIS]</scope>
    <source>
        <tissue>Cervix carcinoma</tissue>
    </source>
</reference>
<reference key="4">
    <citation type="journal article" date="2009" name="Anal. Chem.">
        <title>Lys-N and trypsin cover complementary parts of the phosphoproteome in a refined SCX-based approach.</title>
        <authorList>
            <person name="Gauci S."/>
            <person name="Helbig A.O."/>
            <person name="Slijper M."/>
            <person name="Krijgsveld J."/>
            <person name="Heck A.J."/>
            <person name="Mohammed S."/>
        </authorList>
    </citation>
    <scope>IDENTIFICATION BY MASS SPECTROMETRY [LARGE SCALE ANALYSIS]</scope>
</reference>
<reference key="5">
    <citation type="journal article" date="2010" name="Sci. Signal.">
        <title>Quantitative phosphoproteomics reveals widespread full phosphorylation site occupancy during mitosis.</title>
        <authorList>
            <person name="Olsen J.V."/>
            <person name="Vermeulen M."/>
            <person name="Santamaria A."/>
            <person name="Kumar C."/>
            <person name="Miller M.L."/>
            <person name="Jensen L.J."/>
            <person name="Gnad F."/>
            <person name="Cox J."/>
            <person name="Jensen T.S."/>
            <person name="Nigg E.A."/>
            <person name="Brunak S."/>
            <person name="Mann M."/>
        </authorList>
    </citation>
    <scope>PHOSPHORYLATION [LARGE SCALE ANALYSIS] AT SER-640 AND SER-645</scope>
    <scope>IDENTIFICATION BY MASS SPECTROMETRY [LARGE SCALE ANALYSIS]</scope>
    <source>
        <tissue>Cervix carcinoma</tissue>
    </source>
</reference>
<reference key="6">
    <citation type="journal article" date="2011" name="Biochem. Biophys. Res. Commun.">
        <title>H+/myo-inositol transporter genes, hmit-1.1 and hmit-1.2, have roles in the osmoprotective response in Caenorhabditis elegans.</title>
        <authorList>
            <person name="Kage-Nakadai E."/>
            <person name="Uehara T."/>
            <person name="Mitani S."/>
        </authorList>
    </citation>
    <scope>INDUCTION</scope>
</reference>
<reference key="7">
    <citation type="journal article" date="2013" name="J. Proteome Res.">
        <title>Toward a comprehensive characterization of a human cancer cell phosphoproteome.</title>
        <authorList>
            <person name="Zhou H."/>
            <person name="Di Palma S."/>
            <person name="Preisinger C."/>
            <person name="Peng M."/>
            <person name="Polat A.N."/>
            <person name="Heck A.J."/>
            <person name="Mohammed S."/>
        </authorList>
    </citation>
    <scope>PHOSPHORYLATION [LARGE SCALE ANALYSIS] AT SER-645</scope>
    <scope>IDENTIFICATION BY MASS SPECTROMETRY [LARGE SCALE ANALYSIS]</scope>
    <source>
        <tissue>Cervix carcinoma</tissue>
        <tissue>Erythroleukemia</tissue>
    </source>
</reference>
<reference key="8">
    <citation type="journal article" date="2014" name="J. Proteomics">
        <title>An enzyme assisted RP-RPLC approach for in-depth analysis of human liver phosphoproteome.</title>
        <authorList>
            <person name="Bian Y."/>
            <person name="Song C."/>
            <person name="Cheng K."/>
            <person name="Dong M."/>
            <person name="Wang F."/>
            <person name="Huang J."/>
            <person name="Sun D."/>
            <person name="Wang L."/>
            <person name="Ye M."/>
            <person name="Zou H."/>
        </authorList>
    </citation>
    <scope>PHOSPHORYLATION [LARGE SCALE ANALYSIS] AT SER-645</scope>
    <scope>IDENTIFICATION BY MASS SPECTROMETRY [LARGE SCALE ANALYSIS]</scope>
    <source>
        <tissue>Liver</tissue>
    </source>
</reference>
<proteinExistence type="evidence at protein level"/>
<organism>
    <name type="scientific">Homo sapiens</name>
    <name type="common">Human</name>
    <dbReference type="NCBI Taxonomy" id="9606"/>
    <lineage>
        <taxon>Eukaryota</taxon>
        <taxon>Metazoa</taxon>
        <taxon>Chordata</taxon>
        <taxon>Craniata</taxon>
        <taxon>Vertebrata</taxon>
        <taxon>Euteleostomi</taxon>
        <taxon>Mammalia</taxon>
        <taxon>Eutheria</taxon>
        <taxon>Euarchontoglires</taxon>
        <taxon>Primates</taxon>
        <taxon>Haplorrhini</taxon>
        <taxon>Catarrhini</taxon>
        <taxon>Hominidae</taxon>
        <taxon>Homo</taxon>
    </lineage>
</organism>
<sequence length="648" mass="70371">MSRKASENVEYTLRSLSSLMGERRRKQPEPDAASAAGECSLLAAAESSTSLQSAGAGGGGVGDLERAARRQFQQDETPAFVYVVAVFSALGGFLFGYDTGVVSGAMLLLKRQLSLDALWQELLVSSTVGAAAVSALAGGALNGVFGRRAAILLASALFTAGSAVLAAANNKETLLAGRLVVGLGIGIASMTVPVYIAEVSPPNLRGRLVTINTLFITGGQFFASVVDGAFSYLQKDGWRYMLGLAAVPAVIQFFGFLFLPESPRWLIQKGQTQKARRILSQMRGNQTIDEEYDSIKNNIEEEEKEVGSAGPVICRMLSYPPTRRALIVGCGLQMFQQLSGINTIMYYSATILQMSGVEDDRLAIWLASVTAFTNFIFTLVGVWLVEKVGRRKLTFGSLAGTTVALIILALGFVLSAQVSPRITFKPIAPSGQNATCTRYSYCNECMLDPDCGFCYKMNKSTVIDSSCVPVNKASTNEAAWGRCENETKFKTEDIFWAYNFCPTPYSWTALLGLILYLVFFAPGMGPMPWTVNSEIYPLWARSTGNACSSGINWIFNVLVSLTFLHTAEYLTYYGAFFLYAGFAAVGLLFIYGCLPETKGKKLEEIESLFDNRLCTCGTSDSDEGRYIEYIRVKGSNYHLSDNDASDVE</sequence>
<name>MYCT_HUMAN</name>
<protein>
    <recommendedName>
        <fullName evidence="6">Proton myo-inositol cotransporter</fullName>
        <shortName evidence="5">H(+)-myo-inositol cotransporter</shortName>
        <shortName evidence="5">Hmit</shortName>
    </recommendedName>
    <alternativeName>
        <fullName evidence="5">H(+)-myo-inositol symporter</fullName>
    </alternativeName>
    <alternativeName>
        <fullName>Solute carrier family 2 member 13</fullName>
    </alternativeName>
</protein>
<evidence type="ECO:0000250" key="1">
    <source>
        <dbReference type="UniProtKB" id="Q3UHK1"/>
    </source>
</evidence>
<evidence type="ECO:0000255" key="2"/>
<evidence type="ECO:0000269" key="3">
    <source>
    </source>
</evidence>
<evidence type="ECO:0000269" key="4">
    <source>
    </source>
</evidence>
<evidence type="ECO:0000303" key="5">
    <source>
    </source>
</evidence>
<evidence type="ECO:0000305" key="6"/>
<evidence type="ECO:0000312" key="7">
    <source>
        <dbReference type="HGNC" id="HGNC:15956"/>
    </source>
</evidence>
<evidence type="ECO:0007744" key="8">
    <source>
    </source>
</evidence>
<evidence type="ECO:0007744" key="9">
    <source>
    </source>
</evidence>
<evidence type="ECO:0007744" key="10">
    <source>
    </source>
</evidence>
<evidence type="ECO:0007744" key="11">
    <source>
    </source>
</evidence>
<dbReference type="EMBL" id="AJ315644">
    <property type="protein sequence ID" value="CAC51116.1"/>
    <property type="status" value="ALT_INIT"/>
    <property type="molecule type" value="mRNA"/>
</dbReference>
<dbReference type="EMBL" id="BC117117">
    <property type="protein sequence ID" value="AAI17118.1"/>
    <property type="status" value="ALT_INIT"/>
    <property type="molecule type" value="mRNA"/>
</dbReference>
<dbReference type="EMBL" id="BC117119">
    <property type="protein sequence ID" value="AAI17120.1"/>
    <property type="status" value="ALT_INIT"/>
    <property type="molecule type" value="mRNA"/>
</dbReference>
<dbReference type="CCDS" id="CCDS8736.2"/>
<dbReference type="RefSeq" id="NP_443117.3">
    <property type="nucleotide sequence ID" value="NM_052885.4"/>
</dbReference>
<dbReference type="SMR" id="Q96QE2"/>
<dbReference type="BioGRID" id="125286">
    <property type="interactions" value="14"/>
</dbReference>
<dbReference type="FunCoup" id="Q96QE2">
    <property type="interactions" value="318"/>
</dbReference>
<dbReference type="IntAct" id="Q96QE2">
    <property type="interactions" value="9"/>
</dbReference>
<dbReference type="STRING" id="9606.ENSP00000280871"/>
<dbReference type="TCDB" id="2.A.1.1.25">
    <property type="family name" value="the major facilitator superfamily (mfs)"/>
</dbReference>
<dbReference type="GlyCosmos" id="Q96QE2">
    <property type="glycosylation" value="3 sites, No reported glycans"/>
</dbReference>
<dbReference type="GlyGen" id="Q96QE2">
    <property type="glycosylation" value="4 sites, 1 N-linked glycan (1 site)"/>
</dbReference>
<dbReference type="iPTMnet" id="Q96QE2"/>
<dbReference type="PhosphoSitePlus" id="Q96QE2"/>
<dbReference type="SwissPalm" id="Q96QE2"/>
<dbReference type="BioMuta" id="SLC2A13"/>
<dbReference type="DMDM" id="294862502"/>
<dbReference type="jPOST" id="Q96QE2"/>
<dbReference type="MassIVE" id="Q96QE2"/>
<dbReference type="PaxDb" id="9606-ENSP00000280871"/>
<dbReference type="PeptideAtlas" id="Q96QE2"/>
<dbReference type="ProteomicsDB" id="77861"/>
<dbReference type="Pumba" id="Q96QE2"/>
<dbReference type="Antibodypedia" id="1512">
    <property type="antibodies" value="113 antibodies from 22 providers"/>
</dbReference>
<dbReference type="DNASU" id="114134"/>
<dbReference type="Ensembl" id="ENST00000280871.9">
    <property type="protein sequence ID" value="ENSP00000280871.4"/>
    <property type="gene ID" value="ENSG00000151229.13"/>
</dbReference>
<dbReference type="GeneID" id="114134"/>
<dbReference type="KEGG" id="hsa:114134"/>
<dbReference type="MANE-Select" id="ENST00000280871.9">
    <property type="protein sequence ID" value="ENSP00000280871.4"/>
    <property type="RefSeq nucleotide sequence ID" value="NM_052885.4"/>
    <property type="RefSeq protein sequence ID" value="NP_443117.3"/>
</dbReference>
<dbReference type="UCSC" id="uc010skm.2">
    <property type="organism name" value="human"/>
</dbReference>
<dbReference type="AGR" id="HGNC:15956"/>
<dbReference type="CTD" id="114134"/>
<dbReference type="DisGeNET" id="114134"/>
<dbReference type="GeneCards" id="SLC2A13"/>
<dbReference type="HGNC" id="HGNC:15956">
    <property type="gene designation" value="SLC2A13"/>
</dbReference>
<dbReference type="HPA" id="ENSG00000151229">
    <property type="expression patterns" value="Tissue enhanced (brain, parathyroid gland)"/>
</dbReference>
<dbReference type="MIM" id="611036">
    <property type="type" value="gene"/>
</dbReference>
<dbReference type="neXtProt" id="NX_Q96QE2"/>
<dbReference type="OpenTargets" id="ENSG00000151229"/>
<dbReference type="PharmGKB" id="PA38066"/>
<dbReference type="VEuPathDB" id="HostDB:ENSG00000151229"/>
<dbReference type="eggNOG" id="KOG0254">
    <property type="taxonomic scope" value="Eukaryota"/>
</dbReference>
<dbReference type="GeneTree" id="ENSGT00940000155870"/>
<dbReference type="HOGENOM" id="CLU_001265_30_5_1"/>
<dbReference type="InParanoid" id="Q96QE2"/>
<dbReference type="OMA" id="ETGWRWM"/>
<dbReference type="OrthoDB" id="6339427at2759"/>
<dbReference type="PAN-GO" id="Q96QE2">
    <property type="GO annotations" value="4 GO annotations based on evolutionary models"/>
</dbReference>
<dbReference type="PhylomeDB" id="Q96QE2"/>
<dbReference type="TreeFam" id="TF314916"/>
<dbReference type="PathwayCommons" id="Q96QE2"/>
<dbReference type="Reactome" id="R-HSA-429593">
    <property type="pathway name" value="Inositol transporters"/>
</dbReference>
<dbReference type="SignaLink" id="Q96QE2"/>
<dbReference type="BioGRID-ORCS" id="114134">
    <property type="hits" value="17 hits in 1169 CRISPR screens"/>
</dbReference>
<dbReference type="ChiTaRS" id="SLC2A13">
    <property type="organism name" value="human"/>
</dbReference>
<dbReference type="GeneWiki" id="SLC2A13"/>
<dbReference type="GenomeRNAi" id="114134"/>
<dbReference type="Pharos" id="Q96QE2">
    <property type="development level" value="Tbio"/>
</dbReference>
<dbReference type="PRO" id="PR:Q96QE2"/>
<dbReference type="Proteomes" id="UP000005640">
    <property type="component" value="Chromosome 12"/>
</dbReference>
<dbReference type="RNAct" id="Q96QE2">
    <property type="molecule type" value="protein"/>
</dbReference>
<dbReference type="Bgee" id="ENSG00000151229">
    <property type="expression patterns" value="Expressed in lateral nuclear group of thalamus and 182 other cell types or tissues"/>
</dbReference>
<dbReference type="ExpressionAtlas" id="Q96QE2">
    <property type="expression patterns" value="baseline and differential"/>
</dbReference>
<dbReference type="GO" id="GO:0016324">
    <property type="term" value="C:apical plasma membrane"/>
    <property type="evidence" value="ECO:0000318"/>
    <property type="project" value="GO_Central"/>
</dbReference>
<dbReference type="GO" id="GO:0097450">
    <property type="term" value="C:astrocyte end-foot"/>
    <property type="evidence" value="ECO:0000250"/>
    <property type="project" value="ARUK-UCL"/>
</dbReference>
<dbReference type="GO" id="GO:0044297">
    <property type="term" value="C:cell body"/>
    <property type="evidence" value="ECO:0000314"/>
    <property type="project" value="ARUK-UCL"/>
</dbReference>
<dbReference type="GO" id="GO:0071944">
    <property type="term" value="C:cell periphery"/>
    <property type="evidence" value="ECO:0000314"/>
    <property type="project" value="ARUK-UCL"/>
</dbReference>
<dbReference type="GO" id="GO:0042995">
    <property type="term" value="C:cell projection"/>
    <property type="evidence" value="ECO:0000314"/>
    <property type="project" value="ARUK-UCL"/>
</dbReference>
<dbReference type="GO" id="GO:0005737">
    <property type="term" value="C:cytoplasm"/>
    <property type="evidence" value="ECO:0000250"/>
    <property type="project" value="ARUK-UCL"/>
</dbReference>
<dbReference type="GO" id="GO:0030426">
    <property type="term" value="C:growth cone"/>
    <property type="evidence" value="ECO:0000250"/>
    <property type="project" value="ARUK-UCL"/>
</dbReference>
<dbReference type="GO" id="GO:0043231">
    <property type="term" value="C:intracellular membrane-bounded organelle"/>
    <property type="evidence" value="ECO:0000250"/>
    <property type="project" value="ARUK-UCL"/>
</dbReference>
<dbReference type="GO" id="GO:0016020">
    <property type="term" value="C:membrane"/>
    <property type="evidence" value="ECO:0000250"/>
    <property type="project" value="ARUK-UCL"/>
</dbReference>
<dbReference type="GO" id="GO:0031090">
    <property type="term" value="C:organelle membrane"/>
    <property type="evidence" value="ECO:0000250"/>
    <property type="project" value="ARUK-UCL"/>
</dbReference>
<dbReference type="GO" id="GO:0005886">
    <property type="term" value="C:plasma membrane"/>
    <property type="evidence" value="ECO:0000314"/>
    <property type="project" value="UniProtKB"/>
</dbReference>
<dbReference type="GO" id="GO:0051117">
    <property type="term" value="F:ATPase binding"/>
    <property type="evidence" value="ECO:0000353"/>
    <property type="project" value="ARUK-UCL"/>
</dbReference>
<dbReference type="GO" id="GO:0005365">
    <property type="term" value="F:myo-inositol transmembrane transporter activity"/>
    <property type="evidence" value="ECO:0000250"/>
    <property type="project" value="ARUK-UCL"/>
</dbReference>
<dbReference type="GO" id="GO:0005366">
    <property type="term" value="F:myo-inositol:proton symporter activity"/>
    <property type="evidence" value="ECO:0000314"/>
    <property type="project" value="UniProtKB"/>
</dbReference>
<dbReference type="GO" id="GO:0002020">
    <property type="term" value="F:protease binding"/>
    <property type="evidence" value="ECO:0000353"/>
    <property type="project" value="ARUK-UCL"/>
</dbReference>
<dbReference type="GO" id="GO:0015798">
    <property type="term" value="P:myo-inositol transport"/>
    <property type="evidence" value="ECO:0000314"/>
    <property type="project" value="UniProtKB"/>
</dbReference>
<dbReference type="GO" id="GO:1902004">
    <property type="term" value="P:positive regulation of amyloid-beta formation"/>
    <property type="evidence" value="ECO:0000316"/>
    <property type="project" value="ARUK-UCL"/>
</dbReference>
<dbReference type="GO" id="GO:0055085">
    <property type="term" value="P:transmembrane transport"/>
    <property type="evidence" value="ECO:0000318"/>
    <property type="project" value="GO_Central"/>
</dbReference>
<dbReference type="GO" id="GO:0150104">
    <property type="term" value="P:transport across blood-brain barrier"/>
    <property type="evidence" value="ECO:0000303"/>
    <property type="project" value="ARUK-UCL"/>
</dbReference>
<dbReference type="CDD" id="cd17360">
    <property type="entry name" value="MFS_HMIT_like"/>
    <property type="match status" value="1"/>
</dbReference>
<dbReference type="FunFam" id="1.20.1250.20:FF:000105">
    <property type="entry name" value="proton myo-inositol cotransporter isoform X1"/>
    <property type="match status" value="1"/>
</dbReference>
<dbReference type="FunFam" id="1.20.1250.20:FF:000177">
    <property type="entry name" value="proton myo-inositol cotransporter isoform X1"/>
    <property type="match status" value="1"/>
</dbReference>
<dbReference type="Gene3D" id="1.20.1250.20">
    <property type="entry name" value="MFS general substrate transporter like domains"/>
    <property type="match status" value="2"/>
</dbReference>
<dbReference type="InterPro" id="IPR020846">
    <property type="entry name" value="MFS_dom"/>
</dbReference>
<dbReference type="InterPro" id="IPR005828">
    <property type="entry name" value="MFS_sugar_transport-like"/>
</dbReference>
<dbReference type="InterPro" id="IPR036259">
    <property type="entry name" value="MFS_trans_sf"/>
</dbReference>
<dbReference type="InterPro" id="IPR050814">
    <property type="entry name" value="Myo-inositol_Transporter"/>
</dbReference>
<dbReference type="InterPro" id="IPR003663">
    <property type="entry name" value="Sugar/inositol_transpt"/>
</dbReference>
<dbReference type="InterPro" id="IPR005829">
    <property type="entry name" value="Sugar_transporter_CS"/>
</dbReference>
<dbReference type="NCBIfam" id="TIGR00879">
    <property type="entry name" value="SP"/>
    <property type="match status" value="1"/>
</dbReference>
<dbReference type="PANTHER" id="PTHR48020">
    <property type="entry name" value="PROTON MYO-INOSITOL COTRANSPORTER"/>
    <property type="match status" value="1"/>
</dbReference>
<dbReference type="PANTHER" id="PTHR48020:SF12">
    <property type="entry name" value="PROTON MYO-INOSITOL COTRANSPORTER"/>
    <property type="match status" value="1"/>
</dbReference>
<dbReference type="Pfam" id="PF00083">
    <property type="entry name" value="Sugar_tr"/>
    <property type="match status" value="2"/>
</dbReference>
<dbReference type="PRINTS" id="PR00171">
    <property type="entry name" value="SUGRTRNSPORT"/>
</dbReference>
<dbReference type="SUPFAM" id="SSF103473">
    <property type="entry name" value="MFS general substrate transporter"/>
    <property type="match status" value="2"/>
</dbReference>
<dbReference type="PROSITE" id="PS50850">
    <property type="entry name" value="MFS"/>
    <property type="match status" value="1"/>
</dbReference>
<dbReference type="PROSITE" id="PS00216">
    <property type="entry name" value="SUGAR_TRANSPORT_1"/>
    <property type="match status" value="1"/>
</dbReference>
<dbReference type="PROSITE" id="PS00217">
    <property type="entry name" value="SUGAR_TRANSPORT_2"/>
    <property type="match status" value="1"/>
</dbReference>
<feature type="chain" id="PRO_0000050456" description="Proton myo-inositol cotransporter">
    <location>
        <begin position="1"/>
        <end position="648"/>
    </location>
</feature>
<feature type="topological domain" description="Cytoplasmic" evidence="2">
    <location>
        <begin position="1"/>
        <end position="76"/>
    </location>
</feature>
<feature type="transmembrane region" description="Helical; Name=1" evidence="2">
    <location>
        <begin position="77"/>
        <end position="97"/>
    </location>
</feature>
<feature type="topological domain" description="Extracellular" evidence="2">
    <location>
        <begin position="98"/>
        <end position="125"/>
    </location>
</feature>
<feature type="transmembrane region" description="Helical; Name=2" evidence="2">
    <location>
        <begin position="126"/>
        <end position="146"/>
    </location>
</feature>
<feature type="topological domain" description="Cytoplasmic" evidence="2">
    <location>
        <begin position="147"/>
        <end position="148"/>
    </location>
</feature>
<feature type="transmembrane region" description="Helical; Name=3" evidence="2">
    <location>
        <begin position="149"/>
        <end position="169"/>
    </location>
</feature>
<feature type="topological domain" description="Extracellular" evidence="2">
    <location>
        <begin position="170"/>
        <end position="178"/>
    </location>
</feature>
<feature type="transmembrane region" description="Helical; Name=4" evidence="2">
    <location>
        <begin position="179"/>
        <end position="199"/>
    </location>
</feature>
<feature type="topological domain" description="Cytoplasmic" evidence="2">
    <location>
        <begin position="200"/>
        <end position="212"/>
    </location>
</feature>
<feature type="transmembrane region" description="Helical; Name=5" evidence="2">
    <location>
        <begin position="213"/>
        <end position="233"/>
    </location>
</feature>
<feature type="topological domain" description="Extracellular" evidence="2">
    <location>
        <begin position="234"/>
        <end position="239"/>
    </location>
</feature>
<feature type="transmembrane region" description="Helical; Name=6" evidence="2">
    <location>
        <begin position="240"/>
        <end position="260"/>
    </location>
</feature>
<feature type="topological domain" description="Cytoplasmic" evidence="2">
    <location>
        <begin position="261"/>
        <end position="324"/>
    </location>
</feature>
<feature type="transmembrane region" description="Helical; Name=7" evidence="2">
    <location>
        <begin position="325"/>
        <end position="345"/>
    </location>
</feature>
<feature type="topological domain" description="Extracellular" evidence="2">
    <location>
        <begin position="346"/>
        <end position="363"/>
    </location>
</feature>
<feature type="transmembrane region" description="Helical; Name=8" evidence="2">
    <location>
        <begin position="364"/>
        <end position="384"/>
    </location>
</feature>
<feature type="topological domain" description="Cytoplasmic" evidence="2">
    <location>
        <begin position="385"/>
        <end position="393"/>
    </location>
</feature>
<feature type="transmembrane region" description="Helical; Name=9" evidence="2">
    <location>
        <begin position="394"/>
        <end position="414"/>
    </location>
</feature>
<feature type="topological domain" description="Extracellular" evidence="2">
    <location>
        <begin position="415"/>
        <end position="508"/>
    </location>
</feature>
<feature type="transmembrane region" description="Helical; Name=10" evidence="2">
    <location>
        <begin position="509"/>
        <end position="529"/>
    </location>
</feature>
<feature type="topological domain" description="Cytoplasmic" evidence="2">
    <location>
        <begin position="530"/>
        <end position="549"/>
    </location>
</feature>
<feature type="transmembrane region" description="Helical; Name=11" evidence="2">
    <location>
        <begin position="550"/>
        <end position="570"/>
    </location>
</feature>
<feature type="topological domain" description="Extracellular" evidence="2">
    <location>
        <begin position="571"/>
        <end position="573"/>
    </location>
</feature>
<feature type="transmembrane region" description="Helical; Name=12" evidence="2">
    <location>
        <begin position="574"/>
        <end position="594"/>
    </location>
</feature>
<feature type="topological domain" description="Cytoplasmic" evidence="2">
    <location>
        <begin position="595"/>
        <end position="648"/>
    </location>
</feature>
<feature type="modified residue" description="Phosphoserine" evidence="1">
    <location>
        <position position="6"/>
    </location>
</feature>
<feature type="modified residue" description="Phosphoserine" evidence="1">
    <location>
        <position position="47"/>
    </location>
</feature>
<feature type="modified residue" description="Phosphoserine" evidence="1">
    <location>
        <position position="50"/>
    </location>
</feature>
<feature type="modified residue" description="Phosphoserine" evidence="8 9">
    <location>
        <position position="640"/>
    </location>
</feature>
<feature type="modified residue" description="Phosphoserine" evidence="8 9 10 11">
    <location>
        <position position="645"/>
    </location>
</feature>
<feature type="glycosylation site" description="N-linked (GlcNAc...) asparagine" evidence="2">
    <location>
        <position position="433"/>
    </location>
</feature>
<feature type="glycosylation site" description="N-linked (GlcNAc...) asparagine" evidence="2">
    <location>
        <position position="458"/>
    </location>
</feature>
<feature type="glycosylation site" description="N-linked (GlcNAc...) asparagine" evidence="2">
    <location>
        <position position="485"/>
    </location>
</feature>
<gene>
    <name evidence="7" type="primary">SLC2A13</name>
</gene>
<comment type="function">
    <text evidence="3">H(+)-myo-inositol cotransporter (PubMed:11500374). Can also transport related stereoisomers (PubMed:11500374).</text>
</comment>
<comment type="catalytic activity">
    <reaction evidence="3">
        <text>myo-inositol(out) + H(+)(out) = myo-inositol(in) + H(+)(in)</text>
        <dbReference type="Rhea" id="RHEA:60364"/>
        <dbReference type="ChEBI" id="CHEBI:15378"/>
        <dbReference type="ChEBI" id="CHEBI:17268"/>
    </reaction>
</comment>
<comment type="interaction">
    <interactant intactId="EBI-18082698">
        <id>Q96QE2</id>
    </interactant>
    <interactant intactId="EBI-1752413">
        <id>P78329</id>
        <label>CYP4F2</label>
    </interactant>
    <organismsDiffer>false</organismsDiffer>
    <experiments>3</experiments>
</comment>
<comment type="interaction">
    <interactant intactId="EBI-18082698">
        <id>Q96QE2</id>
    </interactant>
    <interactant intactId="EBI-748974">
        <id>Q96CV9</id>
        <label>OPTN</label>
    </interactant>
    <organismsDiffer>false</organismsDiffer>
    <experiments>3</experiments>
</comment>
<comment type="interaction">
    <interactant intactId="EBI-18082698">
        <id>Q96QE2</id>
    </interactant>
    <interactant intactId="EBI-608347">
        <id>Q04941</id>
        <label>PLP2</label>
    </interactant>
    <organismsDiffer>false</organismsDiffer>
    <experiments>3</experiments>
</comment>
<comment type="interaction">
    <interactant intactId="EBI-18082698">
        <id>Q96QE2</id>
    </interactant>
    <interactant intactId="EBI-9091816">
        <id>Q9NPQ8-4</id>
        <label>RIC8A</label>
    </interactant>
    <organismsDiffer>false</organismsDiffer>
    <experiments>3</experiments>
</comment>
<comment type="subcellular location">
    <subcellularLocation>
        <location evidence="3">Cell membrane</location>
        <topology evidence="3">Multi-pass membrane protein</topology>
    </subcellularLocation>
</comment>
<comment type="tissue specificity">
    <text evidence="3">Predominantly expressed in the brain.</text>
</comment>
<comment type="induction">
    <text evidence="4">Induced by hyperosmotic stress.</text>
</comment>
<comment type="PTM">
    <text evidence="3">Glycosylated.</text>
</comment>
<comment type="similarity">
    <text evidence="6">Belongs to the major facilitator superfamily. Sugar transporter (TC 2.A.1.1) family.</text>
</comment>
<comment type="sequence caution" evidence="6">
    <conflict type="erroneous initiation">
        <sequence resource="EMBL-CDS" id="AAI17118"/>
    </conflict>
    <text>Truncated N-terminus.</text>
</comment>
<comment type="sequence caution" evidence="6">
    <conflict type="erroneous initiation">
        <sequence resource="EMBL-CDS" id="AAI17120"/>
    </conflict>
    <text>Truncated N-terminus.</text>
</comment>
<comment type="sequence caution" evidence="6">
    <conflict type="erroneous initiation">
        <sequence resource="EMBL-CDS" id="CAC51116"/>
    </conflict>
    <text>Truncated N-terminus.</text>
</comment>